<gene>
    <name type="primary">bcsB</name>
    <name type="synonym">yhjN</name>
    <name type="ordered locus">b3532</name>
    <name type="ordered locus">JW3500</name>
</gene>
<proteinExistence type="evidence at protein level"/>
<comment type="function">
    <text evidence="1">Binds the cellulose synthase activator, bis-(3'-5') cyclic diguanylic acid (c-di-GMP).</text>
</comment>
<comment type="pathway">
    <text>Glycan metabolism; bacterial cellulose biosynthesis.</text>
</comment>
<comment type="subunit">
    <text evidence="1">Tightly associated with the cellulose synthase catalytic subunit.</text>
</comment>
<comment type="subcellular location">
    <subcellularLocation>
        <location>Cell inner membrane</location>
        <topology>Single-pass type I membrane protein</topology>
    </subcellularLocation>
</comment>
<comment type="miscellaneous">
    <text>The genes bscA, bcsB, bcsZ and bcsC are constitutively transcribed but cellulose synthesis occurs only when DgcC, a putative transmembrane protein regulated by CsgD, is expressed. Cellulose production is abolished in E.coli K12.</text>
</comment>
<comment type="similarity">
    <text evidence="3">Belongs to the AcsB/BcsB family.</text>
</comment>
<name>BCSB_ECOLI</name>
<keyword id="KW-0002">3D-structure</keyword>
<keyword id="KW-0973">c-di-GMP</keyword>
<keyword id="KW-0997">Cell inner membrane</keyword>
<keyword id="KW-1003">Cell membrane</keyword>
<keyword id="KW-0135">Cellulose biosynthesis</keyword>
<keyword id="KW-0472">Membrane</keyword>
<keyword id="KW-1185">Reference proteome</keyword>
<keyword id="KW-0732">Signal</keyword>
<keyword id="KW-0812">Transmembrane</keyword>
<keyword id="KW-1133">Transmembrane helix</keyword>
<feature type="signal peptide" evidence="2">
    <location>
        <begin position="1"/>
        <end position="25"/>
    </location>
</feature>
<feature type="chain" id="PRO_0000000268" description="Cyclic di-GMP-binding protein">
    <location>
        <begin position="26"/>
        <end position="779"/>
    </location>
</feature>
<feature type="topological domain" description="Periplasmic" evidence="2">
    <location>
        <begin position="26"/>
        <end position="742"/>
    </location>
</feature>
<feature type="transmembrane region" description="Helical" evidence="2">
    <location>
        <begin position="743"/>
        <end position="763"/>
    </location>
</feature>
<feature type="topological domain" description="Cytoplasmic" evidence="2">
    <location>
        <begin position="764"/>
        <end position="779"/>
    </location>
</feature>
<feature type="strand" evidence="6">
    <location>
        <begin position="70"/>
        <end position="76"/>
    </location>
</feature>
<feature type="helix" evidence="6">
    <location>
        <begin position="77"/>
        <end position="80"/>
    </location>
</feature>
<feature type="strand" evidence="6">
    <location>
        <begin position="87"/>
        <end position="93"/>
    </location>
</feature>
<feature type="strand" evidence="6">
    <location>
        <begin position="95"/>
        <end position="101"/>
    </location>
</feature>
<feature type="strand" evidence="6">
    <location>
        <begin position="106"/>
        <end position="119"/>
    </location>
</feature>
<feature type="strand" evidence="5">
    <location>
        <begin position="121"/>
        <end position="123"/>
    </location>
</feature>
<feature type="turn" evidence="6">
    <location>
        <begin position="125"/>
        <end position="127"/>
    </location>
</feature>
<feature type="strand" evidence="6">
    <location>
        <begin position="129"/>
        <end position="143"/>
    </location>
</feature>
<feature type="turn" evidence="6">
    <location>
        <begin position="146"/>
        <end position="150"/>
    </location>
</feature>
<feature type="strand" evidence="6">
    <location>
        <begin position="153"/>
        <end position="158"/>
    </location>
</feature>
<feature type="helix" evidence="6">
    <location>
        <begin position="161"/>
        <end position="163"/>
    </location>
</feature>
<feature type="strand" evidence="6">
    <location>
        <begin position="166"/>
        <end position="175"/>
    </location>
</feature>
<feature type="strand" evidence="6">
    <location>
        <begin position="180"/>
        <end position="182"/>
    </location>
</feature>
<feature type="strand" evidence="6">
    <location>
        <begin position="191"/>
        <end position="194"/>
    </location>
</feature>
<feature type="strand" evidence="6">
    <location>
        <begin position="199"/>
        <end position="206"/>
    </location>
</feature>
<feature type="strand" evidence="6">
    <location>
        <begin position="213"/>
        <end position="215"/>
    </location>
</feature>
<feature type="turn" evidence="6">
    <location>
        <begin position="218"/>
        <end position="220"/>
    </location>
</feature>
<feature type="strand" evidence="6">
    <location>
        <begin position="233"/>
        <end position="238"/>
    </location>
</feature>
<feature type="helix" evidence="6">
    <location>
        <begin position="241"/>
        <end position="257"/>
    </location>
</feature>
<feature type="turn" evidence="4">
    <location>
        <begin position="259"/>
        <end position="261"/>
    </location>
</feature>
<feature type="strand" evidence="6">
    <location>
        <begin position="267"/>
        <end position="270"/>
    </location>
</feature>
<feature type="strand" evidence="6">
    <location>
        <begin position="277"/>
        <end position="285"/>
    </location>
</feature>
<feature type="helix" evidence="6">
    <location>
        <begin position="288"/>
        <end position="290"/>
    </location>
</feature>
<feature type="strand" evidence="6">
    <location>
        <begin position="300"/>
        <end position="305"/>
    </location>
</feature>
<feature type="strand" evidence="6">
    <location>
        <begin position="312"/>
        <end position="321"/>
    </location>
</feature>
<feature type="helix" evidence="6">
    <location>
        <begin position="322"/>
        <end position="334"/>
    </location>
</feature>
<feature type="helix" evidence="6">
    <location>
        <begin position="336"/>
        <end position="338"/>
    </location>
</feature>
<feature type="strand" evidence="6">
    <location>
        <begin position="343"/>
        <end position="350"/>
    </location>
</feature>
<feature type="strand" evidence="5">
    <location>
        <begin position="361"/>
        <end position="363"/>
    </location>
</feature>
<feature type="strand" evidence="6">
    <location>
        <begin position="366"/>
        <end position="368"/>
    </location>
</feature>
<feature type="helix" evidence="6">
    <location>
        <begin position="372"/>
        <end position="374"/>
    </location>
</feature>
<feature type="turn" evidence="6">
    <location>
        <begin position="379"/>
        <end position="382"/>
    </location>
</feature>
<feature type="strand" evidence="6">
    <location>
        <begin position="383"/>
        <end position="386"/>
    </location>
</feature>
<feature type="turn" evidence="6">
    <location>
        <begin position="387"/>
        <end position="389"/>
    </location>
</feature>
<feature type="strand" evidence="6">
    <location>
        <begin position="392"/>
        <end position="397"/>
    </location>
</feature>
<feature type="strand" evidence="5">
    <location>
        <begin position="405"/>
        <end position="408"/>
    </location>
</feature>
<feature type="strand" evidence="6">
    <location>
        <begin position="410"/>
        <end position="413"/>
    </location>
</feature>
<feature type="strand" evidence="6">
    <location>
        <begin position="416"/>
        <end position="418"/>
    </location>
</feature>
<feature type="strand" evidence="6">
    <location>
        <begin position="428"/>
        <end position="433"/>
    </location>
</feature>
<feature type="strand" evidence="6">
    <location>
        <begin position="436"/>
        <end position="442"/>
    </location>
</feature>
<feature type="helix" evidence="6">
    <location>
        <begin position="449"/>
        <end position="452"/>
    </location>
</feature>
<feature type="turn" evidence="6">
    <location>
        <begin position="453"/>
        <end position="455"/>
    </location>
</feature>
<feature type="strand" evidence="6">
    <location>
        <begin position="462"/>
        <end position="464"/>
    </location>
</feature>
<feature type="strand" evidence="6">
    <location>
        <begin position="468"/>
        <end position="471"/>
    </location>
</feature>
<feature type="helix" evidence="6">
    <location>
        <begin position="473"/>
        <end position="475"/>
    </location>
</feature>
<feature type="strand" evidence="6">
    <location>
        <begin position="478"/>
        <end position="487"/>
    </location>
</feature>
<feature type="strand" evidence="4">
    <location>
        <begin position="492"/>
        <end position="495"/>
    </location>
</feature>
<feature type="strand" evidence="6">
    <location>
        <begin position="497"/>
        <end position="502"/>
    </location>
</feature>
<feature type="strand" evidence="6">
    <location>
        <begin position="508"/>
        <end position="512"/>
    </location>
</feature>
<feature type="strand" evidence="4">
    <location>
        <begin position="517"/>
        <end position="519"/>
    </location>
</feature>
<feature type="strand" evidence="6">
    <location>
        <begin position="526"/>
        <end position="529"/>
    </location>
</feature>
<feature type="helix" evidence="6">
    <location>
        <begin position="532"/>
        <end position="538"/>
    </location>
</feature>
<feature type="helix" evidence="6">
    <location>
        <begin position="540"/>
        <end position="543"/>
    </location>
</feature>
<feature type="strand" evidence="6">
    <location>
        <begin position="551"/>
        <end position="554"/>
    </location>
</feature>
<feature type="helix" evidence="6">
    <location>
        <begin position="561"/>
        <end position="578"/>
    </location>
</feature>
<feature type="strand" evidence="6">
    <location>
        <begin position="586"/>
        <end position="589"/>
    </location>
</feature>
<feature type="helix" evidence="6">
    <location>
        <begin position="591"/>
        <end position="594"/>
    </location>
</feature>
<feature type="strand" evidence="6">
    <location>
        <begin position="599"/>
        <end position="605"/>
    </location>
</feature>
<feature type="helix" evidence="6">
    <location>
        <begin position="609"/>
        <end position="612"/>
    </location>
</feature>
<feature type="strand" evidence="5">
    <location>
        <begin position="614"/>
        <end position="616"/>
    </location>
</feature>
<feature type="strand" evidence="6">
    <location>
        <begin position="619"/>
        <end position="622"/>
    </location>
</feature>
<feature type="strand" evidence="6">
    <location>
        <begin position="625"/>
        <end position="632"/>
    </location>
</feature>
<feature type="turn" evidence="6">
    <location>
        <begin position="644"/>
        <end position="647"/>
    </location>
</feature>
<feature type="strand" evidence="6">
    <location>
        <begin position="648"/>
        <end position="659"/>
    </location>
</feature>
<feature type="strand" evidence="6">
    <location>
        <begin position="662"/>
        <end position="668"/>
    </location>
</feature>
<feature type="turn" evidence="5">
    <location>
        <begin position="670"/>
        <end position="672"/>
    </location>
</feature>
<feature type="strand" evidence="6">
    <location>
        <begin position="676"/>
        <end position="684"/>
    </location>
</feature>
<feature type="helix" evidence="6">
    <location>
        <begin position="685"/>
        <end position="696"/>
    </location>
</feature>
<feature type="helix" evidence="6">
    <location>
        <begin position="698"/>
        <end position="701"/>
    </location>
</feature>
<feature type="strand" evidence="6">
    <location>
        <begin position="706"/>
        <end position="712"/>
    </location>
</feature>
<feature type="strand" evidence="6">
    <location>
        <begin position="715"/>
        <end position="719"/>
    </location>
</feature>
<feature type="strand" evidence="6">
    <location>
        <begin position="725"/>
        <end position="728"/>
    </location>
</feature>
<feature type="helix" evidence="6">
    <location>
        <begin position="732"/>
        <end position="735"/>
    </location>
</feature>
<feature type="helix" evidence="6">
    <location>
        <begin position="737"/>
        <end position="739"/>
    </location>
</feature>
<feature type="turn" evidence="7">
    <location>
        <begin position="740"/>
        <end position="742"/>
    </location>
</feature>
<feature type="helix" evidence="7">
    <location>
        <begin position="744"/>
        <end position="773"/>
    </location>
</feature>
<organism>
    <name type="scientific">Escherichia coli (strain K12)</name>
    <dbReference type="NCBI Taxonomy" id="83333"/>
    <lineage>
        <taxon>Bacteria</taxon>
        <taxon>Pseudomonadati</taxon>
        <taxon>Pseudomonadota</taxon>
        <taxon>Gammaproteobacteria</taxon>
        <taxon>Enterobacterales</taxon>
        <taxon>Enterobacteriaceae</taxon>
        <taxon>Escherichia</taxon>
    </lineage>
</organism>
<sequence length="779" mass="86024">MKRKLFWICAVAMGMSAFPSFMTQATPATQPLINAEPAVAAQTEQNPQVGQVMPGVQGADAPVVAQNGPSRDVKLTFAQIAPPPGSMVLRGINPNGSIEFGMRSDEVVTKAMLNLEYTPSPSLLPVQSQLKVYLNDELMGVLPVTKEQLGKKTLAQMPINPLFISDFNRVRLEFVGHYQDVCEKPASTTLWLDVGRSSGLDLTYQTLNVKNDLSHFPVPFFDPSDNRTNTLPMVFAGAPDVGLQQASAIVASWFGSRSGWRGQNFPVLYNQLPDRNAIVFATNDKRPDFLRDHPAVKAPVIEMINHPQNPYVKLLVVFGRDDKDLLQAAKGIAQGNILFRGESVVVNEVKPLLPRKPYDAPNWVRTDRPVTFGELKTYEEQLQSSGLEPAAINVSLNLPPDLYLMRSTGIDMDINYRYTMPPVKDSSRMDISLNNQFLQSFNLSSKQEANRLLLRIPVLQGLLDGKTDVSIPALKLGATNQLRFDFEYMNPMPGGSVDNCITFQPVQNHVVIGDDSTIDFSKYYHFIPMPDLRAFANAGFPFSRMADLSQTITVMPKAPNEAQMETLLNTVGFIGAQTGFPAINLTVTDDGSTIQGKDADIMIIGGIPDKLKDDKQIDLLVQATESWVKTPMRQTPFPGIVPDESDRAAETRSTLTSSGAMAAVIGFQSPYNDQRSVIALLADSPRGYEMLNDAVNDSGKRATMFGSVAVIRESGINSLRVGDVYYVGHLPWFERVWYALANHPILLAVLAAISVILLAWVLWRLLRIISRRRLNPDNE</sequence>
<accession>P37652</accession>
<accession>P76711</accession>
<accession>Q2M7J4</accession>
<reference key="1">
    <citation type="journal article" date="1994" name="Nucleic Acids Res.">
        <title>Analysis of the Escherichia coli genome. V. DNA sequence of the region from 76.0 to 81.5 minutes.</title>
        <authorList>
            <person name="Sofia H.J."/>
            <person name="Burland V."/>
            <person name="Daniels D.L."/>
            <person name="Plunkett G. III"/>
            <person name="Blattner F.R."/>
        </authorList>
    </citation>
    <scope>NUCLEOTIDE SEQUENCE [LARGE SCALE GENOMIC DNA]</scope>
    <source>
        <strain>K12 / MG1655 / ATCC 47076</strain>
    </source>
</reference>
<reference key="2">
    <citation type="journal article" date="1997" name="Science">
        <title>The complete genome sequence of Escherichia coli K-12.</title>
        <authorList>
            <person name="Blattner F.R."/>
            <person name="Plunkett G. III"/>
            <person name="Bloch C.A."/>
            <person name="Perna N.T."/>
            <person name="Burland V."/>
            <person name="Riley M."/>
            <person name="Collado-Vides J."/>
            <person name="Glasner J.D."/>
            <person name="Rode C.K."/>
            <person name="Mayhew G.F."/>
            <person name="Gregor J."/>
            <person name="Davis N.W."/>
            <person name="Kirkpatrick H.A."/>
            <person name="Goeden M.A."/>
            <person name="Rose D.J."/>
            <person name="Mau B."/>
            <person name="Shao Y."/>
        </authorList>
    </citation>
    <scope>NUCLEOTIDE SEQUENCE [LARGE SCALE GENOMIC DNA]</scope>
    <source>
        <strain>K12 / MG1655 / ATCC 47076</strain>
    </source>
</reference>
<reference key="3">
    <citation type="journal article" date="2006" name="Mol. Syst. Biol.">
        <title>Highly accurate genome sequences of Escherichia coli K-12 strains MG1655 and W3110.</title>
        <authorList>
            <person name="Hayashi K."/>
            <person name="Morooka N."/>
            <person name="Yamamoto Y."/>
            <person name="Fujita K."/>
            <person name="Isono K."/>
            <person name="Choi S."/>
            <person name="Ohtsubo E."/>
            <person name="Baba T."/>
            <person name="Wanner B.L."/>
            <person name="Mori H."/>
            <person name="Horiuchi T."/>
        </authorList>
    </citation>
    <scope>NUCLEOTIDE SEQUENCE [LARGE SCALE GENOMIC DNA]</scope>
    <source>
        <strain>K12 / W3110 / ATCC 27325 / DSM 5911</strain>
    </source>
</reference>
<reference key="4">
    <citation type="journal article" date="2001" name="Mol. Microbiol.">
        <title>The multicellular morphotypes of Salmonella typhimurium and Escherichia coli produce cellulose as the second component of the extracellular matrix.</title>
        <authorList>
            <person name="Zogaj X."/>
            <person name="Nimtz M."/>
            <person name="Rohde M."/>
            <person name="Bokranz W."/>
            <person name="Roemling U."/>
        </authorList>
    </citation>
    <scope>CHARACTERIZATION</scope>
    <source>
        <strain>ECOR 10</strain>
        <strain>ECOR 12</strain>
        <strain>TOB1</strain>
    </source>
</reference>
<reference key="5">
    <citation type="journal article" date="2005" name="Science">
        <title>Global topology analysis of the Escherichia coli inner membrane proteome.</title>
        <authorList>
            <person name="Daley D.O."/>
            <person name="Rapp M."/>
            <person name="Granseth E."/>
            <person name="Melen K."/>
            <person name="Drew D."/>
            <person name="von Heijne G."/>
        </authorList>
    </citation>
    <scope>TOPOLOGY [LARGE SCALE ANALYSIS]</scope>
    <source>
        <strain>K12 / MG1655 / ATCC 47076</strain>
    </source>
</reference>
<dbReference type="EMBL" id="U00039">
    <property type="protein sequence ID" value="AAB18509.1"/>
    <property type="molecule type" value="Genomic_DNA"/>
</dbReference>
<dbReference type="EMBL" id="U00096">
    <property type="protein sequence ID" value="AAC76557.1"/>
    <property type="molecule type" value="Genomic_DNA"/>
</dbReference>
<dbReference type="EMBL" id="AP009048">
    <property type="protein sequence ID" value="BAE77762.1"/>
    <property type="molecule type" value="Genomic_DNA"/>
</dbReference>
<dbReference type="PIR" id="G65151">
    <property type="entry name" value="G65151"/>
</dbReference>
<dbReference type="RefSeq" id="NP_417989.1">
    <property type="nucleotide sequence ID" value="NC_000913.3"/>
</dbReference>
<dbReference type="RefSeq" id="WP_001407405.1">
    <property type="nucleotide sequence ID" value="NZ_LN832404.1"/>
</dbReference>
<dbReference type="PDB" id="6YG8">
    <property type="method" value="EM"/>
    <property type="resolution" value="3.00 A"/>
    <property type="chains" value="A/B/C/D/E=1-779"/>
</dbReference>
<dbReference type="PDB" id="7L2Z">
    <property type="method" value="EM"/>
    <property type="resolution" value="3.40 A"/>
    <property type="chains" value="A/B/C/D/E/F=26-779"/>
</dbReference>
<dbReference type="PDB" id="7LBY">
    <property type="method" value="EM"/>
    <property type="resolution" value="4.20 A"/>
    <property type="chains" value="B=1-779"/>
</dbReference>
<dbReference type="PDB" id="9B8I">
    <property type="method" value="EM"/>
    <property type="resolution" value="3.18 A"/>
    <property type="chains" value="C=55-779"/>
</dbReference>
<dbReference type="PDB" id="9B8V">
    <property type="method" value="EM"/>
    <property type="resolution" value="4.00 A"/>
    <property type="chains" value="A/F/G/H/I/J=26-779"/>
</dbReference>
<dbReference type="PDB" id="9FMT">
    <property type="method" value="EM"/>
    <property type="resolution" value="2.35 A"/>
    <property type="chains" value="A/B/C/D/E/F=26-779"/>
</dbReference>
<dbReference type="PDB" id="9FMV">
    <property type="method" value="EM"/>
    <property type="resolution" value="3.43 A"/>
    <property type="chains" value="E=26-779"/>
</dbReference>
<dbReference type="PDB" id="9FMZ">
    <property type="method" value="EM"/>
    <property type="resolution" value="3.60 A"/>
    <property type="chains" value="B=26-779"/>
</dbReference>
<dbReference type="PDB" id="9FNN">
    <property type="method" value="EM"/>
    <property type="resolution" value="2.85 A"/>
    <property type="chains" value="B/X/Y/Z=1-779"/>
</dbReference>
<dbReference type="PDB" id="9FP0">
    <property type="method" value="EM"/>
    <property type="resolution" value="3.37 A"/>
    <property type="chains" value="B=1-779"/>
</dbReference>
<dbReference type="PDBsum" id="6YG8"/>
<dbReference type="PDBsum" id="7L2Z"/>
<dbReference type="PDBsum" id="7LBY"/>
<dbReference type="PDBsum" id="9B8I"/>
<dbReference type="PDBsum" id="9B8V"/>
<dbReference type="PDBsum" id="9FMT"/>
<dbReference type="PDBsum" id="9FMV"/>
<dbReference type="PDBsum" id="9FMZ"/>
<dbReference type="PDBsum" id="9FNN"/>
<dbReference type="PDBsum" id="9FP0"/>
<dbReference type="EMDB" id="EMD-23146"/>
<dbReference type="EMDB" id="EMD-23267"/>
<dbReference type="EMDB" id="EMD-44346"/>
<dbReference type="EMDB" id="EMD-44359"/>
<dbReference type="SMR" id="P37652"/>
<dbReference type="BioGRID" id="4262529">
    <property type="interactions" value="273"/>
</dbReference>
<dbReference type="DIP" id="DIP-12386N"/>
<dbReference type="FunCoup" id="P37652">
    <property type="interactions" value="39"/>
</dbReference>
<dbReference type="IntAct" id="P37652">
    <property type="interactions" value="4"/>
</dbReference>
<dbReference type="STRING" id="511145.b3532"/>
<dbReference type="TCDB" id="4.D.3.1.6">
    <property type="family name" value="the glycan glucosyl transferase (opgh) family"/>
</dbReference>
<dbReference type="PaxDb" id="511145-b3532"/>
<dbReference type="EnsemblBacteria" id="AAC76557">
    <property type="protein sequence ID" value="AAC76557"/>
    <property type="gene ID" value="b3532"/>
</dbReference>
<dbReference type="GeneID" id="948045"/>
<dbReference type="KEGG" id="ecj:JW3500"/>
<dbReference type="KEGG" id="eco:b3532"/>
<dbReference type="KEGG" id="ecoc:C3026_19135"/>
<dbReference type="PATRIC" id="fig|511145.12.peg.3643"/>
<dbReference type="EchoBASE" id="EB2168"/>
<dbReference type="eggNOG" id="COG1215">
    <property type="taxonomic scope" value="Bacteria"/>
</dbReference>
<dbReference type="HOGENOM" id="CLU_003556_1_1_6"/>
<dbReference type="InParanoid" id="P37652"/>
<dbReference type="OMA" id="FQYMNPM"/>
<dbReference type="OrthoDB" id="9806702at2"/>
<dbReference type="PhylomeDB" id="P37652"/>
<dbReference type="BioCyc" id="EcoCyc:EG12259-MONOMER"/>
<dbReference type="BioCyc" id="MetaCyc:EG12259-MONOMER"/>
<dbReference type="UniPathway" id="UPA00694"/>
<dbReference type="PRO" id="PR:P37652"/>
<dbReference type="Proteomes" id="UP000000625">
    <property type="component" value="Chromosome"/>
</dbReference>
<dbReference type="GO" id="GO:0005886">
    <property type="term" value="C:plasma membrane"/>
    <property type="evidence" value="ECO:0000314"/>
    <property type="project" value="EcoCyc"/>
</dbReference>
<dbReference type="GO" id="GO:0030244">
    <property type="term" value="P:cellulose biosynthetic process"/>
    <property type="evidence" value="ECO:0007669"/>
    <property type="project" value="UniProtKB-KW"/>
</dbReference>
<dbReference type="GO" id="GO:0006011">
    <property type="term" value="P:UDP-alpha-D-glucose metabolic process"/>
    <property type="evidence" value="ECO:0007669"/>
    <property type="project" value="InterPro"/>
</dbReference>
<dbReference type="FunFam" id="2.60.120.260:FF:000083">
    <property type="entry name" value="Cyclic di-GMP-binding protein"/>
    <property type="match status" value="1"/>
</dbReference>
<dbReference type="FunFam" id="2.60.120.260:FF:000094">
    <property type="entry name" value="Cyclic di-GMP-binding protein"/>
    <property type="match status" value="1"/>
</dbReference>
<dbReference type="Gene3D" id="2.60.120.260">
    <property type="entry name" value="Galactose-binding domain-like"/>
    <property type="match status" value="2"/>
</dbReference>
<dbReference type="InterPro" id="IPR003920">
    <property type="entry name" value="Cell_synth_B"/>
</dbReference>
<dbReference type="InterPro" id="IPR018513">
    <property type="entry name" value="Cell_synthase_bac"/>
</dbReference>
<dbReference type="NCBIfam" id="NF008323">
    <property type="entry name" value="PRK11114.1-1"/>
    <property type="match status" value="1"/>
</dbReference>
<dbReference type="NCBIfam" id="NF008325">
    <property type="entry name" value="PRK11114.1-3"/>
    <property type="match status" value="1"/>
</dbReference>
<dbReference type="PANTHER" id="PTHR39083">
    <property type="entry name" value="CYCLIC DI-GMP-BINDING PROTEIN"/>
    <property type="match status" value="1"/>
</dbReference>
<dbReference type="PANTHER" id="PTHR39083:SF1">
    <property type="entry name" value="CYCLIC DI-GMP-BINDING PROTEIN"/>
    <property type="match status" value="1"/>
</dbReference>
<dbReference type="Pfam" id="PF03170">
    <property type="entry name" value="BcsB"/>
    <property type="match status" value="1"/>
</dbReference>
<dbReference type="PRINTS" id="PR01440">
    <property type="entry name" value="CELLSNTHASEB"/>
</dbReference>
<protein>
    <recommendedName>
        <fullName>Cyclic di-GMP-binding protein</fullName>
    </recommendedName>
    <alternativeName>
        <fullName>Cellulose synthase regulatory subunit</fullName>
    </alternativeName>
</protein>
<evidence type="ECO:0000250" key="1"/>
<evidence type="ECO:0000255" key="2"/>
<evidence type="ECO:0000305" key="3"/>
<evidence type="ECO:0007829" key="4">
    <source>
        <dbReference type="PDB" id="6YG8"/>
    </source>
</evidence>
<evidence type="ECO:0007829" key="5">
    <source>
        <dbReference type="PDB" id="7L2Z"/>
    </source>
</evidence>
<evidence type="ECO:0007829" key="6">
    <source>
        <dbReference type="PDB" id="9FMT"/>
    </source>
</evidence>
<evidence type="ECO:0007829" key="7">
    <source>
        <dbReference type="PDB" id="9FNN"/>
    </source>
</evidence>